<keyword id="KW-0963">Cytoplasm</keyword>
<keyword id="KW-0539">Nucleus</keyword>
<keyword id="KW-1185">Reference proteome</keyword>
<sequence length="211" mass="22711">MSTLDDIFGSSPPPTTHHAHPNPPTTTEPSDLPSLRRQHVTAGYRDGISASKTSHVQAGFDAGFPIGAQLGMRAGTILGILEGVLRGYDESQKAVVKKLPAGRKGATSTNGTATPTSTMTDEERQAKRAEILALYQQAVKELDVRKVFEGISEKEISGGEKAEVRLGRQGEGAIGKWEEKVRVPRWEENMDALEMKDTVTAEGTGVEVEES</sequence>
<protein>
    <recommendedName>
        <fullName>Protein yae1</fullName>
    </recommendedName>
</protein>
<feature type="chain" id="PRO_0000324420" description="Protein yae1">
    <location>
        <begin position="1"/>
        <end position="211"/>
    </location>
</feature>
<feature type="region of interest" description="Disordered" evidence="3">
    <location>
        <begin position="1"/>
        <end position="35"/>
    </location>
</feature>
<feature type="region of interest" description="deca-GX3 motif; required for interaction with LTO1" evidence="1">
    <location>
        <begin position="43"/>
        <end position="83"/>
    </location>
</feature>
<feature type="region of interest" description="Disordered" evidence="3">
    <location>
        <begin position="100"/>
        <end position="121"/>
    </location>
</feature>
<feature type="compositionally biased region" description="Pro residues" evidence="3">
    <location>
        <begin position="11"/>
        <end position="26"/>
    </location>
</feature>
<feature type="compositionally biased region" description="Low complexity" evidence="3">
    <location>
        <begin position="105"/>
        <end position="119"/>
    </location>
</feature>
<gene>
    <name type="primary">yae1</name>
    <name type="ORF">An02g13390</name>
</gene>
<evidence type="ECO:0000250" key="1">
    <source>
        <dbReference type="UniProtKB" id="P47118"/>
    </source>
</evidence>
<evidence type="ECO:0000250" key="2">
    <source>
        <dbReference type="UniProtKB" id="Q9NRH1"/>
    </source>
</evidence>
<evidence type="ECO:0000256" key="3">
    <source>
        <dbReference type="SAM" id="MobiDB-lite"/>
    </source>
</evidence>
<evidence type="ECO:0000305" key="4"/>
<comment type="function">
    <text evidence="2">The complex LTO1:YAE1 may function as a target specific adapter that probably recruits apo-RPLI1 to the cytosolic iron-sulfur protein assembly (CIA) complex machinery. May be required for biogenesis of the large ribosomal subunit and initiation of translation.</text>
</comment>
<comment type="subunit">
    <text evidence="2">May form a complex with LTO1.</text>
</comment>
<comment type="subcellular location">
    <subcellularLocation>
        <location evidence="1">Cytoplasm</location>
    </subcellularLocation>
    <subcellularLocation>
        <location evidence="1">Nucleus</location>
    </subcellularLocation>
</comment>
<comment type="similarity">
    <text evidence="4">Belongs to the YAE1 family.</text>
</comment>
<organism>
    <name type="scientific">Aspergillus niger (strain ATCC MYA-4892 / CBS 513.88 / FGSC A1513)</name>
    <dbReference type="NCBI Taxonomy" id="425011"/>
    <lineage>
        <taxon>Eukaryota</taxon>
        <taxon>Fungi</taxon>
        <taxon>Dikarya</taxon>
        <taxon>Ascomycota</taxon>
        <taxon>Pezizomycotina</taxon>
        <taxon>Eurotiomycetes</taxon>
        <taxon>Eurotiomycetidae</taxon>
        <taxon>Eurotiales</taxon>
        <taxon>Aspergillaceae</taxon>
        <taxon>Aspergillus</taxon>
        <taxon>Aspergillus subgen. Circumdati</taxon>
    </lineage>
</organism>
<dbReference type="EMBL" id="AM270038">
    <property type="protein sequence ID" value="CAK47752.1"/>
    <property type="molecule type" value="Genomic_DNA"/>
</dbReference>
<dbReference type="RefSeq" id="XP_001400470.1">
    <property type="nucleotide sequence ID" value="XM_001400433.1"/>
</dbReference>
<dbReference type="EnsemblFungi" id="CAK47752">
    <property type="protein sequence ID" value="CAK47752"/>
    <property type="gene ID" value="An02g13390"/>
</dbReference>
<dbReference type="GeneID" id="4979879"/>
<dbReference type="KEGG" id="ang:An02g13390"/>
<dbReference type="VEuPathDB" id="FungiDB:An02g13390"/>
<dbReference type="HOGENOM" id="CLU_066684_1_1_1"/>
<dbReference type="Proteomes" id="UP000006706">
    <property type="component" value="Chromosome 4R"/>
</dbReference>
<dbReference type="GO" id="GO:0005737">
    <property type="term" value="C:cytoplasm"/>
    <property type="evidence" value="ECO:0007669"/>
    <property type="project" value="UniProtKB-SubCell"/>
</dbReference>
<dbReference type="GO" id="GO:0005634">
    <property type="term" value="C:nucleus"/>
    <property type="evidence" value="ECO:0007669"/>
    <property type="project" value="UniProtKB-SubCell"/>
</dbReference>
<dbReference type="GO" id="GO:0051604">
    <property type="term" value="P:protein maturation"/>
    <property type="evidence" value="ECO:0000250"/>
    <property type="project" value="UniProtKB"/>
</dbReference>
<dbReference type="InterPro" id="IPR019191">
    <property type="entry name" value="Essential_protein_Yae1_N"/>
</dbReference>
<dbReference type="InterPro" id="IPR038881">
    <property type="entry name" value="Yae1-like"/>
</dbReference>
<dbReference type="PANTHER" id="PTHR18829">
    <property type="entry name" value="PROTEIN YAE1 HOMOLOG"/>
    <property type="match status" value="1"/>
</dbReference>
<dbReference type="PANTHER" id="PTHR18829:SF0">
    <property type="entry name" value="PROTEIN YAE1 HOMOLOG"/>
    <property type="match status" value="1"/>
</dbReference>
<dbReference type="Pfam" id="PF09811">
    <property type="entry name" value="Yae1_N"/>
    <property type="match status" value="1"/>
</dbReference>
<accession>A2QF59</accession>
<reference key="1">
    <citation type="journal article" date="2007" name="Nat. Biotechnol.">
        <title>Genome sequencing and analysis of the versatile cell factory Aspergillus niger CBS 513.88.</title>
        <authorList>
            <person name="Pel H.J."/>
            <person name="de Winde J.H."/>
            <person name="Archer D.B."/>
            <person name="Dyer P.S."/>
            <person name="Hofmann G."/>
            <person name="Schaap P.J."/>
            <person name="Turner G."/>
            <person name="de Vries R.P."/>
            <person name="Albang R."/>
            <person name="Albermann K."/>
            <person name="Andersen M.R."/>
            <person name="Bendtsen J.D."/>
            <person name="Benen J.A.E."/>
            <person name="van den Berg M."/>
            <person name="Breestraat S."/>
            <person name="Caddick M.X."/>
            <person name="Contreras R."/>
            <person name="Cornell M."/>
            <person name="Coutinho P.M."/>
            <person name="Danchin E.G.J."/>
            <person name="Debets A.J.M."/>
            <person name="Dekker P."/>
            <person name="van Dijck P.W.M."/>
            <person name="van Dijk A."/>
            <person name="Dijkhuizen L."/>
            <person name="Driessen A.J.M."/>
            <person name="d'Enfert C."/>
            <person name="Geysens S."/>
            <person name="Goosen C."/>
            <person name="Groot G.S.P."/>
            <person name="de Groot P.W.J."/>
            <person name="Guillemette T."/>
            <person name="Henrissat B."/>
            <person name="Herweijer M."/>
            <person name="van den Hombergh J.P.T.W."/>
            <person name="van den Hondel C.A.M.J.J."/>
            <person name="van der Heijden R.T.J.M."/>
            <person name="van der Kaaij R.M."/>
            <person name="Klis F.M."/>
            <person name="Kools H.J."/>
            <person name="Kubicek C.P."/>
            <person name="van Kuyk P.A."/>
            <person name="Lauber J."/>
            <person name="Lu X."/>
            <person name="van der Maarel M.J.E.C."/>
            <person name="Meulenberg R."/>
            <person name="Menke H."/>
            <person name="Mortimer M.A."/>
            <person name="Nielsen J."/>
            <person name="Oliver S.G."/>
            <person name="Olsthoorn M."/>
            <person name="Pal K."/>
            <person name="van Peij N.N.M.E."/>
            <person name="Ram A.F.J."/>
            <person name="Rinas U."/>
            <person name="Roubos J.A."/>
            <person name="Sagt C.M.J."/>
            <person name="Schmoll M."/>
            <person name="Sun J."/>
            <person name="Ussery D."/>
            <person name="Varga J."/>
            <person name="Vervecken W."/>
            <person name="van de Vondervoort P.J.J."/>
            <person name="Wedler H."/>
            <person name="Woesten H.A.B."/>
            <person name="Zeng A.-P."/>
            <person name="van Ooyen A.J.J."/>
            <person name="Visser J."/>
            <person name="Stam H."/>
        </authorList>
    </citation>
    <scope>NUCLEOTIDE SEQUENCE [LARGE SCALE GENOMIC DNA]</scope>
    <source>
        <strain>ATCC MYA-4892 / CBS 513.88 / FGSC A1513</strain>
    </source>
</reference>
<proteinExistence type="inferred from homology"/>
<name>YAE1_ASPNC</name>